<keyword id="KW-1003">Cell membrane</keyword>
<keyword id="KW-0165">Cleavage on pair of basic residues</keyword>
<keyword id="KW-0903">Direct protein sequencing</keyword>
<keyword id="KW-1015">Disulfide bond</keyword>
<keyword id="KW-0272">Extracellular matrix</keyword>
<keyword id="KW-0278">Fertilization</keyword>
<keyword id="KW-0325">Glycoprotein</keyword>
<keyword id="KW-0472">Membrane</keyword>
<keyword id="KW-0675">Receptor</keyword>
<keyword id="KW-1185">Reference proteome</keyword>
<keyword id="KW-0964">Secreted</keyword>
<keyword id="KW-0732">Signal</keyword>
<keyword id="KW-0812">Transmembrane</keyword>
<keyword id="KW-1133">Transmembrane helix</keyword>
<organism>
    <name type="scientific">Bos taurus</name>
    <name type="common">Bovine</name>
    <dbReference type="NCBI Taxonomy" id="9913"/>
    <lineage>
        <taxon>Eukaryota</taxon>
        <taxon>Metazoa</taxon>
        <taxon>Chordata</taxon>
        <taxon>Craniata</taxon>
        <taxon>Vertebrata</taxon>
        <taxon>Euteleostomi</taxon>
        <taxon>Mammalia</taxon>
        <taxon>Eutheria</taxon>
        <taxon>Laurasiatheria</taxon>
        <taxon>Artiodactyla</taxon>
        <taxon>Ruminantia</taxon>
        <taxon>Pecora</taxon>
        <taxon>Bovidae</taxon>
        <taxon>Bovinae</taxon>
        <taxon>Bos</taxon>
    </lineage>
</organism>
<proteinExistence type="evidence at protein level"/>
<reference key="1">
    <citation type="journal article" date="2001" name="Eur. J. Biochem.">
        <title>Molecular cloning of bovine zona pellucida glycoproteins ZPA and ZPB and analysis for sperm-binding component of the zona.</title>
        <authorList>
            <person name="Yonezawa N."/>
            <person name="Fukui N."/>
            <person name="Kuno M."/>
            <person name="Shinoda M."/>
            <person name="Goko S."/>
            <person name="Mitsui S."/>
            <person name="Nakano M."/>
        </authorList>
    </citation>
    <scope>NUCLEOTIDE SEQUENCE [MRNA]</scope>
    <scope>PROTEOLYTIC PROCESSING</scope>
    <source>
        <tissue>Ovary</tissue>
    </source>
</reference>
<reference key="2">
    <citation type="journal article" date="2002" name="Eur. J. Biochem.">
        <title>Localization of N-linked carbohydrate chains in glycoprotein ZPA of the bovine egg zona pellucida.</title>
        <authorList>
            <person name="Ikeda K."/>
            <person name="Yonezawa N."/>
            <person name="Naoi K."/>
            <person name="Katsumata T."/>
            <person name="Hamano S."/>
            <person name="Nakano M."/>
        </authorList>
    </citation>
    <scope>PROTEIN SEQUENCE OF 81-91; 178-187; 189-208; 468-477 AND 525-534</scope>
    <scope>GLYCOSYLATION AT ASN-83; ASN-191 AND ASN-527</scope>
    <scope>TISSUE SPECIFICITY</scope>
</reference>
<name>ZP2_BOVIN</name>
<dbReference type="EMBL" id="AB042653">
    <property type="protein sequence ID" value="BAB21482.1"/>
    <property type="molecule type" value="mRNA"/>
</dbReference>
<dbReference type="RefSeq" id="NP_776398.1">
    <property type="nucleotide sequence ID" value="NM_173973.2"/>
</dbReference>
<dbReference type="SMR" id="Q9BH10"/>
<dbReference type="FunCoup" id="Q9BH10">
    <property type="interactions" value="10"/>
</dbReference>
<dbReference type="STRING" id="9913.ENSBTAP00000070281"/>
<dbReference type="GlyConnect" id="631">
    <property type="glycosylation" value="9 N-Linked glycans"/>
</dbReference>
<dbReference type="GlyCosmos" id="Q9BH10">
    <property type="glycosylation" value="4 sites, 17 glycans"/>
</dbReference>
<dbReference type="GlyGen" id="Q9BH10">
    <property type="glycosylation" value="5 sites, 17 N-linked glycans (1 site)"/>
</dbReference>
<dbReference type="iPTMnet" id="Q9BH10"/>
<dbReference type="PaxDb" id="9913-ENSBTAP00000015289"/>
<dbReference type="GeneID" id="280963"/>
<dbReference type="KEGG" id="bta:280963"/>
<dbReference type="CTD" id="7783"/>
<dbReference type="eggNOG" id="ENOG502QPI2">
    <property type="taxonomic scope" value="Eukaryota"/>
</dbReference>
<dbReference type="InParanoid" id="Q9BH10"/>
<dbReference type="OrthoDB" id="9903747at2759"/>
<dbReference type="Proteomes" id="UP000009136">
    <property type="component" value="Unplaced"/>
</dbReference>
<dbReference type="GO" id="GO:0062023">
    <property type="term" value="C:collagen-containing extracellular matrix"/>
    <property type="evidence" value="ECO:0000250"/>
    <property type="project" value="UniProtKB"/>
</dbReference>
<dbReference type="GO" id="GO:0035805">
    <property type="term" value="C:egg coat"/>
    <property type="evidence" value="ECO:0000250"/>
    <property type="project" value="UniProtKB"/>
</dbReference>
<dbReference type="GO" id="GO:0005783">
    <property type="term" value="C:endoplasmic reticulum"/>
    <property type="evidence" value="ECO:0000250"/>
    <property type="project" value="UniProtKB"/>
</dbReference>
<dbReference type="GO" id="GO:0005576">
    <property type="term" value="C:extracellular region"/>
    <property type="evidence" value="ECO:0007669"/>
    <property type="project" value="UniProtKB-KW"/>
</dbReference>
<dbReference type="GO" id="GO:0005771">
    <property type="term" value="C:multivesicular body"/>
    <property type="evidence" value="ECO:0000250"/>
    <property type="project" value="UniProtKB"/>
</dbReference>
<dbReference type="GO" id="GO:0005886">
    <property type="term" value="C:plasma membrane"/>
    <property type="evidence" value="ECO:0000250"/>
    <property type="project" value="UniProtKB"/>
</dbReference>
<dbReference type="GO" id="GO:0032190">
    <property type="term" value="F:acrosin binding"/>
    <property type="evidence" value="ECO:0000318"/>
    <property type="project" value="GO_Central"/>
</dbReference>
<dbReference type="GO" id="GO:0035804">
    <property type="term" value="F:structural constituent of egg coat"/>
    <property type="evidence" value="ECO:0000250"/>
    <property type="project" value="UniProtKB"/>
</dbReference>
<dbReference type="GO" id="GO:0007339">
    <property type="term" value="P:binding of sperm to zona pellucida"/>
    <property type="evidence" value="ECO:0000250"/>
    <property type="project" value="UniProtKB"/>
</dbReference>
<dbReference type="GO" id="GO:0060468">
    <property type="term" value="P:prevention of polyspermy"/>
    <property type="evidence" value="ECO:0000250"/>
    <property type="project" value="UniProtKB"/>
</dbReference>
<dbReference type="FunFam" id="2.60.40.3210:FF:000006">
    <property type="entry name" value="Zona pellucida sperm-binding protein 2"/>
    <property type="match status" value="1"/>
</dbReference>
<dbReference type="FunFam" id="2.60.40.4100:FF:000004">
    <property type="entry name" value="Zona pellucida sperm-binding protein 2"/>
    <property type="match status" value="1"/>
</dbReference>
<dbReference type="Gene3D" id="2.60.40.4100">
    <property type="entry name" value="Zona pellucida, ZP-C domain"/>
    <property type="match status" value="1"/>
</dbReference>
<dbReference type="Gene3D" id="2.60.40.3210">
    <property type="entry name" value="Zona pellucida, ZP-N domain"/>
    <property type="match status" value="1"/>
</dbReference>
<dbReference type="InterPro" id="IPR051148">
    <property type="entry name" value="Zona_Pellucida_Domain_gp"/>
</dbReference>
<dbReference type="InterPro" id="IPR055355">
    <property type="entry name" value="ZP-C"/>
</dbReference>
<dbReference type="InterPro" id="IPR042235">
    <property type="entry name" value="ZP-C_dom"/>
</dbReference>
<dbReference type="InterPro" id="IPR055356">
    <property type="entry name" value="ZP-N"/>
</dbReference>
<dbReference type="InterPro" id="IPR048290">
    <property type="entry name" value="ZP_chr"/>
</dbReference>
<dbReference type="InterPro" id="IPR001507">
    <property type="entry name" value="ZP_dom"/>
</dbReference>
<dbReference type="InterPro" id="IPR017977">
    <property type="entry name" value="ZP_dom_CS"/>
</dbReference>
<dbReference type="PANTHER" id="PTHR23343">
    <property type="entry name" value="ZONA PELLUCIDA SPERM-BINDING PROTEIN"/>
    <property type="match status" value="1"/>
</dbReference>
<dbReference type="PANTHER" id="PTHR23343:SF4">
    <property type="entry name" value="ZONA PELLUCIDA SPERM-BINDING PROTEIN 2"/>
    <property type="match status" value="1"/>
</dbReference>
<dbReference type="Pfam" id="PF23736">
    <property type="entry name" value="Ig_ZP2"/>
    <property type="match status" value="1"/>
</dbReference>
<dbReference type="Pfam" id="PF23740">
    <property type="entry name" value="Ig_ZP2_3rd"/>
    <property type="match status" value="1"/>
</dbReference>
<dbReference type="Pfam" id="PF23738">
    <property type="entry name" value="Ig_ZP2_N"/>
    <property type="match status" value="1"/>
</dbReference>
<dbReference type="Pfam" id="PF00100">
    <property type="entry name" value="Zona_pellucida"/>
    <property type="match status" value="1"/>
</dbReference>
<dbReference type="Pfam" id="PF23344">
    <property type="entry name" value="ZP-N"/>
    <property type="match status" value="1"/>
</dbReference>
<dbReference type="PRINTS" id="PR00023">
    <property type="entry name" value="ZPELLUCIDA"/>
</dbReference>
<dbReference type="SMART" id="SM00241">
    <property type="entry name" value="ZP"/>
    <property type="match status" value="1"/>
</dbReference>
<dbReference type="PROSITE" id="PS00682">
    <property type="entry name" value="ZP_1"/>
    <property type="match status" value="1"/>
</dbReference>
<dbReference type="PROSITE" id="PS51034">
    <property type="entry name" value="ZP_2"/>
    <property type="match status" value="1"/>
</dbReference>
<accession>Q9BH10</accession>
<sequence>MACRQRGDSGRPSSWFRADWRSFFLSFTLLTSVNSIDVNQLDPAFPGTVTCYENRMVVEFKRTLGNKIQHASVVDSLGLKMLNCTYVLDPEKLTLKAPYESCTKRVLGQHQMTITFMNDNTAHRQKTVLYHVSCPVMQAGRHDQHSGSTICSKDFMSFTFHFFPGLADDTAGPKPQMGWTVTVGDGERAQNLTLQEALTQGYNLLIENQKMSIQVLFHATGVTHYSQGNSHLYMVPLKLTHVSPGQTIILSSRLICASDPVTCNATHMTLTIPEFPGKLKSVSFENKNIAVNQLHNSGIVMEIANGLRLHFSKTLLKTKFSEKCLPYQFYLSSLKLTFYTQLETVSMVIYPECVCESTVSIVSGELCTQDGFMDVEVYRHQTKPALNLDTLRVGDSSCQPTIKAPFQGLVKFHIPLNGCGTRHKFENGKVIYENEIHALWADLPPSTISRDSEFRMTVRCYYSSSNMLINTNVESLPPPVASVKPGPLALTLQTYPDNSYLQPYGDKDYPVVRYLRQPIYLEVRVLNRTDPNIKLVLDDCWATSTMDPASLPQWNIIVDGCEYNLDNHRTTFHPVGSSVAYPNHYQRFAVKTFAFVSEDPAFSHLVYFHCSALICDQLSSNFPLCSASCLVSSRSRRATGATEEEKMIVSLPGPILLLSDGSSFRDAVDSKGHGTSGYAAFKTMVAVVALAGVVATLSLISYLRKKRITVLNH</sequence>
<evidence type="ECO:0000250" key="1"/>
<evidence type="ECO:0000250" key="2">
    <source>
        <dbReference type="UniProtKB" id="P20239"/>
    </source>
</evidence>
<evidence type="ECO:0000250" key="3">
    <source>
        <dbReference type="UniProtKB" id="Q05996"/>
    </source>
</evidence>
<evidence type="ECO:0000255" key="4"/>
<evidence type="ECO:0000255" key="5">
    <source>
        <dbReference type="PROSITE-ProRule" id="PRU00375"/>
    </source>
</evidence>
<evidence type="ECO:0000269" key="6">
    <source>
    </source>
</evidence>
<evidence type="ECO:0000269" key="7">
    <source>
    </source>
</evidence>
<evidence type="ECO:0000305" key="8"/>
<protein>
    <recommendedName>
        <fullName>Zona pellucida sperm-binding protein 2</fullName>
    </recommendedName>
    <alternativeName>
        <fullName>Zona pellucida glycoprotein 2</fullName>
        <shortName>Zp-2</shortName>
    </alternativeName>
    <alternativeName>
        <fullName>Zona pellucida protein A</fullName>
    </alternativeName>
    <component>
        <recommendedName>
            <fullName>Processed zona pellucida sperm-binding protein 2</fullName>
        </recommendedName>
    </component>
</protein>
<feature type="signal peptide" evidence="2">
    <location>
        <begin position="1"/>
        <end position="35"/>
    </location>
</feature>
<feature type="chain" id="PRO_0000041683" description="Zona pellucida sperm-binding protein 2">
    <location>
        <begin position="36"/>
        <end position="635"/>
    </location>
</feature>
<feature type="chain" id="PRO_0000304556" description="Processed zona pellucida sperm-binding protein 2">
    <location>
        <begin position="36"/>
        <end status="unknown"/>
    </location>
</feature>
<feature type="propeptide" id="PRO_0000041684" description="Removed in mature form" evidence="2">
    <location>
        <begin position="636"/>
        <end position="713"/>
    </location>
</feature>
<feature type="topological domain" description="Extracellular" evidence="4">
    <location>
        <begin position="36"/>
        <end position="682"/>
    </location>
</feature>
<feature type="transmembrane region" description="Helical" evidence="4">
    <location>
        <begin position="683"/>
        <end position="703"/>
    </location>
</feature>
<feature type="topological domain" description="Cytoplasmic" evidence="4">
    <location>
        <begin position="704"/>
        <end position="713"/>
    </location>
</feature>
<feature type="domain" description="ZP" evidence="5">
    <location>
        <begin position="366"/>
        <end position="632"/>
    </location>
</feature>
<feature type="region of interest" description="Disordered" evidence="2">
    <location>
        <begin position="464"/>
        <end position="486"/>
    </location>
</feature>
<feature type="site" description="Cleavage; by ASTL" evidence="2">
    <location>
        <begin position="167"/>
        <end position="168"/>
    </location>
</feature>
<feature type="site" description="Cleavage" evidence="2">
    <location>
        <begin position="635"/>
        <end position="636"/>
    </location>
</feature>
<feature type="glycosylation site" description="N-linked (GlcNAc...) asparagine" evidence="7">
    <location>
        <position position="83"/>
    </location>
</feature>
<feature type="glycosylation site" description="N-linked (GlcNAc...) asparagine" evidence="7">
    <location>
        <position position="191"/>
    </location>
</feature>
<feature type="glycosylation site" description="O-linked (GalNAc...) threonine" evidence="1">
    <location>
        <position position="457"/>
    </location>
</feature>
<feature type="glycosylation site" description="N-linked (GlcNAc...) asparagine" evidence="7">
    <location>
        <position position="527"/>
    </location>
</feature>
<feature type="disulfide bond" evidence="2">
    <location>
        <begin position="51"/>
        <end position="134"/>
    </location>
</feature>
<feature type="disulfide bond" evidence="2">
    <location>
        <begin position="84"/>
        <end position="102"/>
    </location>
</feature>
<feature type="disulfide bond" evidence="2">
    <location>
        <begin position="367"/>
        <end position="460"/>
    </location>
</feature>
<feature type="disulfide bond" evidence="2">
    <location>
        <begin position="398"/>
        <end position="419"/>
    </location>
</feature>
<feature type="disulfide bond" evidence="2">
    <location>
        <begin position="540"/>
        <end position="610"/>
    </location>
</feature>
<feature type="disulfide bond" evidence="2">
    <location>
        <begin position="561"/>
        <end position="629"/>
    </location>
</feature>
<feature type="disulfide bond" evidence="2">
    <location>
        <begin position="615"/>
        <end position="625"/>
    </location>
</feature>
<gene>
    <name type="primary">ZP2</name>
    <name type="synonym">ZPA</name>
</gene>
<comment type="function">
    <text evidence="2">Component of the zona pellucida, an extracellular matrix surrounding oocytes which mediates sperm binding, induction of the acrosome reaction and prevents post-fertilization polyspermy. The zona pellucida is composed of 3 to 4 glycoproteins, ZP1, ZP2, ZP3, and ZP4. ZP2 may act as a secondary sperm receptor.</text>
</comment>
<comment type="subunit">
    <text evidence="2 3">Can form homopolymers that assemble into long fibers (in vitro). Polymers of ZP2 and ZP3 organized into long filaments cross-linked by ZP1 homodimers. Interacts with ZP3.</text>
</comment>
<comment type="subcellular location">
    <molecule>Processed zona pellucida sperm-binding protein 2</molecule>
    <subcellularLocation>
        <location evidence="2">Zona pellucida</location>
    </subcellularLocation>
</comment>
<comment type="subcellular location">
    <subcellularLocation>
        <location evidence="2">Cell membrane</location>
        <topology evidence="4">Single-pass type I membrane protein</topology>
    </subcellularLocation>
</comment>
<comment type="tissue specificity">
    <text evidence="7">Expressed in oocytes (at protein level).</text>
</comment>
<comment type="domain">
    <text evidence="2">The ZP domain is involved in the polymerization of the ZP proteins to form the zona pellucida.</text>
</comment>
<comment type="PTM">
    <text evidence="6">Proteolytically cleaved before the transmembrane segment to yield the secreted ectodomain incorporated in the zona pellucida.</text>
</comment>
<comment type="PTM">
    <text evidence="2 6">Additional proteolytically cleavage of the N-terminal peptide of 30 kDa occurs in one-cell and two-cell embryos (By similarity). Proteolytically cleaved in the N-terminal part probably by the metalloendopeptidase ASTL exocytosed from cortical granules after fertilization, yielding a N-terminal peptide of about 30 kDa which remains covalently attached to the C-terminal peptide via disulfide bond(s). This cleavage may play an important role in the post-fertilization block to polyspermy.</text>
</comment>
<comment type="PTM">
    <text evidence="7">N-glycosylated; N-linked glycans are of high-mannose/hybrid type, as well as bi-, tri- and tetra-antennary sialylated complex types.</text>
</comment>
<comment type="PTM">
    <text evidence="2">O-glycosylated; contains sulfate-substituted glycans.</text>
</comment>
<comment type="similarity">
    <text evidence="8">Belongs to the ZP domain family. ZPA subfamily.</text>
</comment>